<reference key="1">
    <citation type="journal article" date="2005" name="Science">
        <title>Genome sequence of the PCE-dechlorinating bacterium Dehalococcoides ethenogenes.</title>
        <authorList>
            <person name="Seshadri R."/>
            <person name="Adrian L."/>
            <person name="Fouts D.E."/>
            <person name="Eisen J.A."/>
            <person name="Phillippy A.M."/>
            <person name="Methe B.A."/>
            <person name="Ward N.L."/>
            <person name="Nelson W.C."/>
            <person name="DeBoy R.T."/>
            <person name="Khouri H.M."/>
            <person name="Kolonay J.F."/>
            <person name="Dodson R.J."/>
            <person name="Daugherty S.C."/>
            <person name="Brinkac L.M."/>
            <person name="Sullivan S.A."/>
            <person name="Madupu R."/>
            <person name="Nelson K.E."/>
            <person name="Kang K.H."/>
            <person name="Impraim M."/>
            <person name="Tran K."/>
            <person name="Robinson J.M."/>
            <person name="Forberger H.A."/>
            <person name="Fraser C.M."/>
            <person name="Zinder S.H."/>
            <person name="Heidelberg J.F."/>
        </authorList>
    </citation>
    <scope>NUCLEOTIDE SEQUENCE [LARGE SCALE GENOMIC DNA]</scope>
    <source>
        <strain>ATCC BAA-2266 / KCTC 15142 / 195</strain>
    </source>
</reference>
<protein>
    <recommendedName>
        <fullName evidence="1">Cobyrinate a,c-diamide synthase</fullName>
        <ecNumber evidence="1">6.3.5.11</ecNumber>
    </recommendedName>
    <alternativeName>
        <fullName evidence="1">Cobyrinic acid a,c-diamide synthetase</fullName>
    </alternativeName>
</protein>
<dbReference type="EC" id="6.3.5.11" evidence="1"/>
<dbReference type="EMBL" id="CP000027">
    <property type="protein sequence ID" value="AAW40541.1"/>
    <property type="molecule type" value="Genomic_DNA"/>
</dbReference>
<dbReference type="RefSeq" id="WP_010935933.1">
    <property type="nucleotide sequence ID" value="NC_002936.3"/>
</dbReference>
<dbReference type="SMR" id="Q3ZA71"/>
<dbReference type="STRING" id="243164.DET0128"/>
<dbReference type="GeneID" id="3230506"/>
<dbReference type="KEGG" id="det:DET0128"/>
<dbReference type="PATRIC" id="fig|243164.10.peg.119"/>
<dbReference type="eggNOG" id="COG1797">
    <property type="taxonomic scope" value="Bacteria"/>
</dbReference>
<dbReference type="HOGENOM" id="CLU_022752_2_0_0"/>
<dbReference type="InParanoid" id="Q3ZA71"/>
<dbReference type="Proteomes" id="UP000008289">
    <property type="component" value="Chromosome"/>
</dbReference>
<dbReference type="GO" id="GO:0005524">
    <property type="term" value="F:ATP binding"/>
    <property type="evidence" value="ECO:0007669"/>
    <property type="project" value="UniProtKB-UniRule"/>
</dbReference>
<dbReference type="GO" id="GO:0042242">
    <property type="term" value="F:cobyrinic acid a,c-diamide synthase activity"/>
    <property type="evidence" value="ECO:0007669"/>
    <property type="project" value="UniProtKB-UniRule"/>
</dbReference>
<dbReference type="GO" id="GO:0009236">
    <property type="term" value="P:cobalamin biosynthetic process"/>
    <property type="evidence" value="ECO:0007669"/>
    <property type="project" value="UniProtKB-UniRule"/>
</dbReference>
<dbReference type="CDD" id="cd05388">
    <property type="entry name" value="CobB_N"/>
    <property type="match status" value="1"/>
</dbReference>
<dbReference type="CDD" id="cd03130">
    <property type="entry name" value="GATase1_CobB"/>
    <property type="match status" value="1"/>
</dbReference>
<dbReference type="Gene3D" id="3.40.50.880">
    <property type="match status" value="1"/>
</dbReference>
<dbReference type="Gene3D" id="3.40.50.300">
    <property type="entry name" value="P-loop containing nucleotide triphosphate hydrolases"/>
    <property type="match status" value="1"/>
</dbReference>
<dbReference type="HAMAP" id="MF_00027">
    <property type="entry name" value="CobB_CbiA"/>
    <property type="match status" value="1"/>
</dbReference>
<dbReference type="InterPro" id="IPR004484">
    <property type="entry name" value="CbiA/CobB_synth"/>
</dbReference>
<dbReference type="InterPro" id="IPR029062">
    <property type="entry name" value="Class_I_gatase-like"/>
</dbReference>
<dbReference type="InterPro" id="IPR002586">
    <property type="entry name" value="CobQ/CobB/MinD/ParA_Nub-bd_dom"/>
</dbReference>
<dbReference type="InterPro" id="IPR011698">
    <property type="entry name" value="GATase_3"/>
</dbReference>
<dbReference type="InterPro" id="IPR027417">
    <property type="entry name" value="P-loop_NTPase"/>
</dbReference>
<dbReference type="NCBIfam" id="TIGR00379">
    <property type="entry name" value="cobB"/>
    <property type="match status" value="1"/>
</dbReference>
<dbReference type="NCBIfam" id="NF002204">
    <property type="entry name" value="PRK01077.1"/>
    <property type="match status" value="1"/>
</dbReference>
<dbReference type="PANTHER" id="PTHR43873">
    <property type="entry name" value="COBYRINATE A,C-DIAMIDE SYNTHASE"/>
    <property type="match status" value="1"/>
</dbReference>
<dbReference type="PANTHER" id="PTHR43873:SF1">
    <property type="entry name" value="COBYRINATE A,C-DIAMIDE SYNTHASE"/>
    <property type="match status" value="1"/>
</dbReference>
<dbReference type="Pfam" id="PF01656">
    <property type="entry name" value="CbiA"/>
    <property type="match status" value="1"/>
</dbReference>
<dbReference type="Pfam" id="PF07685">
    <property type="entry name" value="GATase_3"/>
    <property type="match status" value="1"/>
</dbReference>
<dbReference type="SUPFAM" id="SSF52317">
    <property type="entry name" value="Class I glutamine amidotransferase-like"/>
    <property type="match status" value="1"/>
</dbReference>
<dbReference type="SUPFAM" id="SSF52540">
    <property type="entry name" value="P-loop containing nucleoside triphosphate hydrolases"/>
    <property type="match status" value="1"/>
</dbReference>
<dbReference type="PROSITE" id="PS51274">
    <property type="entry name" value="GATASE_COBBQ"/>
    <property type="match status" value="1"/>
</dbReference>
<feature type="chain" id="PRO_1000002290" description="Cobyrinate a,c-diamide synthase">
    <location>
        <begin position="1"/>
        <end position="463"/>
    </location>
</feature>
<feature type="domain" description="GATase cobBQ-type" evidence="2">
    <location>
        <begin position="252"/>
        <end position="448"/>
    </location>
</feature>
<feature type="active site" description="Nucleophile" evidence="1">
    <location>
        <position position="335"/>
    </location>
</feature>
<feature type="site" description="Increases nucleophilicity of active site Cys" evidence="1">
    <location>
        <position position="440"/>
    </location>
</feature>
<sequence>MNFPRIVIAGISSSSGKTTISSGITAALTKRGHKVAAYKCGPDYIDPGYLTLAADNPCHNLDSWMLGKDAMTEVFFHGLKNREIALVEGVMGLYDGYSGERPGGSTAEIARLLSAPVILLLNISHMAESAAAIVLGYKNLDPRINIAGVILNQAGSLRHYEICRKAIEKYTSTPVVGYLLRNKELAIPERHLGLKTTSEGGELASFIQNLAAHIESTIDIDRILNIARNAPPLPERPCPYLFPETPARPVTRIAIARDEAFSFYYQANLDMLSDWGAELCYFSPVHDTCLPENIGGIYIGGGFPEIMAAELSANQAMKTALTKAAEDGMPIYAECGGLMYLSEAIEDFDNNKYLMLGLLPGVSVMQKKLHRLGYTRAAVQNDNILSGKGTELRGHIFHWSKLPSPKTKPAYTLLEPAEYAGQNEGFIIGNSTNVLASYLHLHFGTNPDLAKNFIRVSKGFYAI</sequence>
<keyword id="KW-0067">ATP-binding</keyword>
<keyword id="KW-0315">Glutamine amidotransferase</keyword>
<keyword id="KW-0436">Ligase</keyword>
<keyword id="KW-0460">Magnesium</keyword>
<keyword id="KW-0547">Nucleotide-binding</keyword>
<comment type="function">
    <text evidence="1">Catalyzes the ATP-dependent amidation of the two carboxylate groups at positions a and c of cobyrinate, using either L-glutamine or ammonia as the nitrogen source.</text>
</comment>
<comment type="catalytic activity">
    <reaction evidence="1">
        <text>cob(II)yrinate + 2 L-glutamine + 2 ATP + 2 H2O = cob(II)yrinate a,c diamide + 2 L-glutamate + 2 ADP + 2 phosphate + 2 H(+)</text>
        <dbReference type="Rhea" id="RHEA:26289"/>
        <dbReference type="ChEBI" id="CHEBI:15377"/>
        <dbReference type="ChEBI" id="CHEBI:15378"/>
        <dbReference type="ChEBI" id="CHEBI:29985"/>
        <dbReference type="ChEBI" id="CHEBI:30616"/>
        <dbReference type="ChEBI" id="CHEBI:43474"/>
        <dbReference type="ChEBI" id="CHEBI:58359"/>
        <dbReference type="ChEBI" id="CHEBI:58537"/>
        <dbReference type="ChEBI" id="CHEBI:58894"/>
        <dbReference type="ChEBI" id="CHEBI:456216"/>
        <dbReference type="EC" id="6.3.5.11"/>
    </reaction>
</comment>
<comment type="cofactor">
    <cofactor evidence="1">
        <name>Mg(2+)</name>
        <dbReference type="ChEBI" id="CHEBI:18420"/>
    </cofactor>
</comment>
<comment type="domain">
    <text evidence="1">Comprises of two domains. The C-terminal domain contains the binding site for glutamine and catalyzes the hydrolysis of this substrate to glutamate and ammonia. The N-terminal domain is anticipated to bind ATP and cobyrinate and catalyzes the ultimate synthesis of the diamide product. The ammonia produced via the glutaminase domain is probably translocated to the adjacent domain via a molecular tunnel, where it reacts with an activated intermediate.</text>
</comment>
<comment type="miscellaneous">
    <text evidence="1">The a and c carboxylates of cobyrinate are activated for nucleophilic attack via formation of a phosphorylated intermediate by ATP. CbiA catalyzes first the amidation of the c-carboxylate, and then that of the a-carboxylate.</text>
</comment>
<comment type="similarity">
    <text evidence="3">Belongs to the CobB/CbiA family.</text>
</comment>
<comment type="caution">
    <text evidence="3">The physiological significance of this enzyme is not known since D.mccartyi is cobalamin auxotroph.</text>
</comment>
<organism>
    <name type="scientific">Dehalococcoides mccartyi (strain ATCC BAA-2266 / KCTC 15142 / 195)</name>
    <name type="common">Dehalococcoides ethenogenes (strain 195)</name>
    <dbReference type="NCBI Taxonomy" id="243164"/>
    <lineage>
        <taxon>Bacteria</taxon>
        <taxon>Bacillati</taxon>
        <taxon>Chloroflexota</taxon>
        <taxon>Dehalococcoidia</taxon>
        <taxon>Dehalococcoidales</taxon>
        <taxon>Dehalococcoidaceae</taxon>
        <taxon>Dehalococcoides</taxon>
    </lineage>
</organism>
<proteinExistence type="inferred from homology"/>
<name>CBIA_DEHM1</name>
<accession>Q3ZA71</accession>
<gene>
    <name type="primary">cbiA</name>
    <name evidence="4" type="synonym">cobB</name>
    <name type="ordered locus">DET0128</name>
</gene>
<evidence type="ECO:0000250" key="1">
    <source>
        <dbReference type="UniProtKB" id="P29946"/>
    </source>
</evidence>
<evidence type="ECO:0000255" key="2">
    <source>
        <dbReference type="PROSITE-ProRule" id="PRU00606"/>
    </source>
</evidence>
<evidence type="ECO:0000305" key="3"/>
<evidence type="ECO:0000312" key="4">
    <source>
        <dbReference type="EMBL" id="AAW40541.1"/>
    </source>
</evidence>